<comment type="function">
    <text evidence="4 5 9">CAHS proteins are cytosolic heat soluble proteins that seem to contribute to the anhydrobiosis in tardigrades, but their specific mechanisms are yet to be identified (PubMed:28306513, PubMed:33545053). It is possible that protection during anhydrobiosis might occur via the stabilization of vitrifying small molecules such as sugars, but not via the direct glass transition of CAHS proteins themselves (Probable).</text>
</comment>
<comment type="subcellular location">
    <subcellularLocation>
        <location evidence="8">Cytoplasm</location>
    </subcellularLocation>
</comment>
<comment type="induction">
    <text evidence="4">Expression is highly induced during desiccation (PubMed:28306513).</text>
</comment>
<comment type="domain">
    <text evidence="1">CAHS proteins contain 2 repeats of 19-mer peptides designated as CAHS-motifs that comprise each two octapeptides connected by a tripeptide (By similarity).</text>
</comment>
<comment type="disruption phenotype">
    <text evidence="4">Affects slightly survival under dry conditions but does not affect survival under frozen conditions (PubMed:28306513).</text>
</comment>
<comment type="miscellaneous">
    <text evidence="4">Trehalose, a disaccharide essential for several organisms to survive drying, is detected at low levels or not at all in some tardigrade species, indicating that tardigrades possess potentially novel mechanisms for surviving desiccation involving tardigrade-specific intrinsically disordered proteins (TDPs) (PubMed:28306513).</text>
</comment>
<comment type="similarity">
    <text evidence="7">Belongs to the Cytosolic-abundant heat soluble protein (CAHS) family.</text>
</comment>
<comment type="caution">
    <text evidence="4 5">It was suggested that CAHS proteins were intrinsically unstructured and show heat-dependent glass transition, which contributes to the vitrification of cells, and this further leads to desiccation tolerance (PubMed:28306513). However, more recent studies led to the conclusion that there was no evidence supporting glass transition of CAHS proteins to be contributing to the glass transition of the whole tardigrade (PubMed:33545053).</text>
</comment>
<organism evidence="6">
    <name type="scientific">Hypsibius exemplaris</name>
    <name type="common">Freshwater tardigrade</name>
    <dbReference type="NCBI Taxonomy" id="2072580"/>
    <lineage>
        <taxon>Eukaryota</taxon>
        <taxon>Metazoa</taxon>
        <taxon>Ecdysozoa</taxon>
        <taxon>Tardigrada</taxon>
        <taxon>Eutardigrada</taxon>
        <taxon>Parachela</taxon>
        <taxon>Hypsibioidea</taxon>
        <taxon>Hypsibiidae</taxon>
        <taxon>Hypsibius</taxon>
    </lineage>
</organism>
<proteinExistence type="evidence at transcript level"/>
<reference key="1">
    <citation type="journal article" date="2017" name="Mol. Cell">
        <title>Tardigrades use intrinsically disordered proteins to survive desiccation.</title>
        <authorList>
            <person name="Boothby T.C."/>
            <person name="Tapia H."/>
            <person name="Brozena A.H."/>
            <person name="Piszkiewicz S."/>
            <person name="Smith A.E."/>
            <person name="Giovannini I."/>
            <person name="Rebecchi L."/>
            <person name="Pielak G.J."/>
            <person name="Koshland D."/>
            <person name="Goldstein B."/>
        </authorList>
    </citation>
    <scope>FUNCTION</scope>
    <scope>INDUCTION</scope>
    <scope>DISRUPTION PHENOTYPE</scope>
</reference>
<reference key="2">
    <citation type="journal article" date="2021" name="Mol. Cell">
        <title>Reconsidering the 'glass transition' hypothesis of intrinsically unstructured CAHS proteins in desiccation tolerance of tardigrades.</title>
        <authorList>
            <person name="Arakawa K."/>
            <person name="Numata K."/>
        </authorList>
    </citation>
    <scope>FUNCTION</scope>
</reference>
<keyword id="KW-0175">Coiled coil</keyword>
<keyword id="KW-0963">Cytoplasm</keyword>
<keyword id="KW-0677">Repeat</keyword>
<keyword id="KW-0346">Stress response</keyword>
<feature type="chain" id="PRO_0000440192" description="Cytosolic-abundant heat soluble protein 77580">
    <location>
        <begin position="1"/>
        <end position="224"/>
    </location>
</feature>
<feature type="region of interest" description="Disordered" evidence="3">
    <location>
        <begin position="1"/>
        <end position="38"/>
    </location>
</feature>
<feature type="region of interest" description="CAHS motif 1" evidence="1">
    <location>
        <begin position="122"/>
        <end position="140"/>
    </location>
</feature>
<feature type="region of interest" description="CAHS motif 2" evidence="1">
    <location>
        <begin position="159"/>
        <end position="177"/>
    </location>
</feature>
<feature type="region of interest" description="Disordered" evidence="3">
    <location>
        <begin position="200"/>
        <end position="224"/>
    </location>
</feature>
<feature type="coiled-coil region" evidence="2">
    <location>
        <begin position="83"/>
        <end position="191"/>
    </location>
</feature>
<feature type="compositionally biased region" description="Low complexity" evidence="3">
    <location>
        <begin position="1"/>
        <end position="13"/>
    </location>
</feature>
<feature type="compositionally biased region" description="Basic and acidic residues" evidence="3">
    <location>
        <begin position="24"/>
        <end position="38"/>
    </location>
</feature>
<feature type="compositionally biased region" description="Low complexity" evidence="3">
    <location>
        <begin position="200"/>
        <end position="215"/>
    </location>
</feature>
<gene>
    <name evidence="6" type="primary">CAHS 77580</name>
</gene>
<evidence type="ECO:0000250" key="1">
    <source>
        <dbReference type="UniProtKB" id="J7M799"/>
    </source>
</evidence>
<evidence type="ECO:0000255" key="2"/>
<evidence type="ECO:0000256" key="3">
    <source>
        <dbReference type="SAM" id="MobiDB-lite"/>
    </source>
</evidence>
<evidence type="ECO:0000269" key="4">
    <source>
    </source>
</evidence>
<evidence type="ECO:0000269" key="5">
    <source>
    </source>
</evidence>
<evidence type="ECO:0000303" key="6">
    <source>
    </source>
</evidence>
<evidence type="ECO:0000305" key="7"/>
<evidence type="ECO:0000305" key="8">
    <source>
    </source>
</evidence>
<evidence type="ECO:0000305" key="9">
    <source>
    </source>
</evidence>
<protein>
    <recommendedName>
        <fullName evidence="6">Cytosolic-abundant heat soluble protein 77580</fullName>
        <shortName evidence="6">CAHS 77580</shortName>
    </recommendedName>
    <alternativeName>
        <fullName evidence="6">Tardigrade-specific intrinsically disordered protein CAHS 77580</fullName>
        <shortName evidence="6">TDP CAHS 77580</shortName>
    </alternativeName>
</protein>
<dbReference type="SMR" id="P0CU43"/>
<dbReference type="OrthoDB" id="10055812at2759"/>
<dbReference type="GO" id="GO:0005737">
    <property type="term" value="C:cytoplasm"/>
    <property type="evidence" value="ECO:0007669"/>
    <property type="project" value="UniProtKB-SubCell"/>
</dbReference>
<dbReference type="GO" id="GO:0009269">
    <property type="term" value="P:response to desiccation"/>
    <property type="evidence" value="ECO:0000315"/>
    <property type="project" value="DisProt"/>
</dbReference>
<dbReference type="DisProt" id="DP01378"/>
<accession>P0CU43</accession>
<name>CAHS3_HYPEX</name>
<sequence length="224" mass="25924">MSNYQQESSYQYSDRSNNGQQQEQQEKKEVEHSSYTHTDVKVNMPNLIAPFISSSAGLAQELVGEGFQASVSRITGASGELTVIDTEAETEEARRDMEAKAREQELLSRQFEKELERKTEAYRKQQEVETEKIRKELEKQHLRDVEFRKELMEQTIENQKRQIDLEARYAKKELERERNKVKRVLERSKFHTDIQVNMEAAAGSTHSGSSSVAVSESEKFQTNN</sequence>